<feature type="chain" id="PRO_1000064576" description="Phosphoglycerol transferase I">
    <location>
        <begin position="1"/>
        <end position="763"/>
    </location>
</feature>
<feature type="transmembrane region" description="Helical" evidence="1">
    <location>
        <begin position="1"/>
        <end position="21"/>
    </location>
</feature>
<feature type="transmembrane region" description="Helical" evidence="1">
    <location>
        <begin position="26"/>
        <end position="46"/>
    </location>
</feature>
<feature type="transmembrane region" description="Helical" evidence="1">
    <location>
        <begin position="77"/>
        <end position="97"/>
    </location>
</feature>
<feature type="transmembrane region" description="Helical" evidence="1">
    <location>
        <begin position="108"/>
        <end position="128"/>
    </location>
</feature>
<organism>
    <name type="scientific">Salmonella choleraesuis (strain SC-B67)</name>
    <dbReference type="NCBI Taxonomy" id="321314"/>
    <lineage>
        <taxon>Bacteria</taxon>
        <taxon>Pseudomonadati</taxon>
        <taxon>Pseudomonadota</taxon>
        <taxon>Gammaproteobacteria</taxon>
        <taxon>Enterobacterales</taxon>
        <taxon>Enterobacteriaceae</taxon>
        <taxon>Salmonella</taxon>
    </lineage>
</organism>
<evidence type="ECO:0000255" key="1">
    <source>
        <dbReference type="HAMAP-Rule" id="MF_01070"/>
    </source>
</evidence>
<sequence>MSELLSVALFLASVLIYAWKAGRNTWWFAATLTVLGLFVILNITLYASDYFTGDGINDAVLYTLTNSLTGAGVGKYILPGIGIALALVAVFGALGWVLRRRRHHPHHVGYSLLALLLALGSVDASPAFRQITELVKSQMRDGDPDFAVYYKEPAKTIPNPKLNLVYIYGESLERTYFDNDAFPNLTPELGALKNEGLDFSHTMQLPGTDYTIAGMVASQCGIPLFAPFEGNASASVSSFFPQNICLGDILKNSGYQNYFVQGANLRFAGKDVFLKSHGFDNLYGAEELKTVVADPSYRNDWGFYDDTVLDEAWKKFEALSRSGQRFSLFTLTVDTHHPDGFISRTCNRKRYDYDGKPNQSFSAVSCSQENIAEFINKIKASPWFKDTVIVVSSDHLAMNNTAWKYLNKQDRNNLFFILRGDKPQQETLAVKRNTMDNGATVLDILGGDNFIGLGRNSLSGQSLSEVFLNVKEKVLAMKPDIIRLWNFPKEIKDFTVDRDKNMIAFSGSHFRLPLLLRVSDKRVEPLPESEYSAPLRFQLADFAPRDNFVWIDRCYKMAQLWAPALALSTDWCVSQGQLGGQQTVQHVDKAQWQGKTAFKDTMIDMERYKGNVDTLKIVDNDIRYKADSFIFNVAGAPEEVKQFSGISRPESWGRWSNAQLGDEVKIEYKAPLPKKFDLVITAKAFGDNAERPIPVRVGNEEQTLVLGHDVSTITLHFNNPTDANTLVIAPPAPVSTNEGNILGHSPRKLGIGMVEIKVVNVEG</sequence>
<accession>Q57G63</accession>
<proteinExistence type="inferred from homology"/>
<name>OPGB_SALCH</name>
<keyword id="KW-0997">Cell inner membrane</keyword>
<keyword id="KW-1003">Cell membrane</keyword>
<keyword id="KW-0472">Membrane</keyword>
<keyword id="KW-0808">Transferase</keyword>
<keyword id="KW-0812">Transmembrane</keyword>
<keyword id="KW-1133">Transmembrane helix</keyword>
<reference key="1">
    <citation type="journal article" date="2005" name="Nucleic Acids Res.">
        <title>The genome sequence of Salmonella enterica serovar Choleraesuis, a highly invasive and resistant zoonotic pathogen.</title>
        <authorList>
            <person name="Chiu C.-H."/>
            <person name="Tang P."/>
            <person name="Chu C."/>
            <person name="Hu S."/>
            <person name="Bao Q."/>
            <person name="Yu J."/>
            <person name="Chou Y.-Y."/>
            <person name="Wang H.-S."/>
            <person name="Lee Y.-S."/>
        </authorList>
    </citation>
    <scope>NUCLEOTIDE SEQUENCE [LARGE SCALE GENOMIC DNA]</scope>
    <source>
        <strain>SC-B67</strain>
    </source>
</reference>
<comment type="function">
    <text evidence="1">Transfers a phosphoglycerol residue from phosphatidylglycerol to the membrane-bound nascent glucan backbones.</text>
</comment>
<comment type="catalytic activity">
    <reaction evidence="1">
        <text>a phosphatidylglycerol + a membrane-derived-oligosaccharide D-glucose = a 1,2-diacyl-sn-glycerol + a membrane-derived-oligosaccharide 6-(glycerophospho)-D-glucose.</text>
        <dbReference type="EC" id="2.7.8.20"/>
    </reaction>
</comment>
<comment type="pathway">
    <text evidence="1">Glycan metabolism; osmoregulated periplasmic glucan (OPG) biosynthesis.</text>
</comment>
<comment type="subcellular location">
    <subcellularLocation>
        <location evidence="1">Cell inner membrane</location>
        <topology evidence="1">Multi-pass membrane protein</topology>
    </subcellularLocation>
</comment>
<comment type="similarity">
    <text evidence="1">Belongs to the OpgB family.</text>
</comment>
<protein>
    <recommendedName>
        <fullName evidence="1">Phosphoglycerol transferase I</fullName>
        <ecNumber evidence="1">2.7.8.20</ecNumber>
    </recommendedName>
    <alternativeName>
        <fullName evidence="1">Phosphatidylglycerol--membrane-oligosaccharide glycerophosphotransferase</fullName>
    </alternativeName>
</protein>
<gene>
    <name evidence="1" type="primary">mdoB</name>
    <name evidence="1" type="synonym">opgB</name>
    <name type="ordered locus">SCH_4393</name>
</gene>
<dbReference type="EC" id="2.7.8.20" evidence="1"/>
<dbReference type="EMBL" id="AE017220">
    <property type="protein sequence ID" value="AAX68299.1"/>
    <property type="molecule type" value="Genomic_DNA"/>
</dbReference>
<dbReference type="RefSeq" id="WP_001541466.1">
    <property type="nucleotide sequence ID" value="NC_006905.1"/>
</dbReference>
<dbReference type="SMR" id="Q57G63"/>
<dbReference type="KEGG" id="sec:SCH_4393"/>
<dbReference type="HOGENOM" id="CLU_023986_1_0_6"/>
<dbReference type="UniPathway" id="UPA00637"/>
<dbReference type="Proteomes" id="UP000000538">
    <property type="component" value="Chromosome"/>
</dbReference>
<dbReference type="GO" id="GO:0005886">
    <property type="term" value="C:plasma membrane"/>
    <property type="evidence" value="ECO:0007669"/>
    <property type="project" value="UniProtKB-SubCell"/>
</dbReference>
<dbReference type="GO" id="GO:0008960">
    <property type="term" value="F:phosphatidylglycerol-membrane-oligosaccharide glycerophosphotransferase activity"/>
    <property type="evidence" value="ECO:0007669"/>
    <property type="project" value="UniProtKB-UniRule"/>
</dbReference>
<dbReference type="GO" id="GO:0009250">
    <property type="term" value="P:glucan biosynthetic process"/>
    <property type="evidence" value="ECO:0007669"/>
    <property type="project" value="UniProtKB-UniRule"/>
</dbReference>
<dbReference type="CDD" id="cd16015">
    <property type="entry name" value="LTA_synthase"/>
    <property type="match status" value="1"/>
</dbReference>
<dbReference type="FunFam" id="3.40.720.10:FF:000009">
    <property type="entry name" value="Phosphoglycerol transferase I"/>
    <property type="match status" value="1"/>
</dbReference>
<dbReference type="Gene3D" id="3.40.720.10">
    <property type="entry name" value="Alkaline Phosphatase, subunit A"/>
    <property type="match status" value="1"/>
</dbReference>
<dbReference type="HAMAP" id="MF_01070">
    <property type="entry name" value="MdoB_OpgB"/>
    <property type="match status" value="1"/>
</dbReference>
<dbReference type="InterPro" id="IPR017850">
    <property type="entry name" value="Alkaline_phosphatase_core_sf"/>
</dbReference>
<dbReference type="InterPro" id="IPR054288">
    <property type="entry name" value="DUF7024"/>
</dbReference>
<dbReference type="InterPro" id="IPR020881">
    <property type="entry name" value="OpgB"/>
</dbReference>
<dbReference type="InterPro" id="IPR050448">
    <property type="entry name" value="OpgB/LTA_synthase_biosynth"/>
</dbReference>
<dbReference type="InterPro" id="IPR000917">
    <property type="entry name" value="Sulfatase_N"/>
</dbReference>
<dbReference type="NCBIfam" id="NF003000">
    <property type="entry name" value="PRK03776.1"/>
    <property type="match status" value="1"/>
</dbReference>
<dbReference type="PANTHER" id="PTHR47371">
    <property type="entry name" value="LIPOTEICHOIC ACID SYNTHASE"/>
    <property type="match status" value="1"/>
</dbReference>
<dbReference type="PANTHER" id="PTHR47371:SF3">
    <property type="entry name" value="PHOSPHOGLYCEROL TRANSFERASE I"/>
    <property type="match status" value="1"/>
</dbReference>
<dbReference type="Pfam" id="PF22895">
    <property type="entry name" value="DUF7024"/>
    <property type="match status" value="1"/>
</dbReference>
<dbReference type="Pfam" id="PF00884">
    <property type="entry name" value="Sulfatase"/>
    <property type="match status" value="1"/>
</dbReference>
<dbReference type="SUPFAM" id="SSF53649">
    <property type="entry name" value="Alkaline phosphatase-like"/>
    <property type="match status" value="1"/>
</dbReference>